<name>DNAT_SHIDS</name>
<proteinExistence type="inferred from homology"/>
<feature type="chain" id="PRO_0000228962" description="Replication restart protein DnaT">
    <location>
        <begin position="1"/>
        <end position="179"/>
    </location>
</feature>
<feature type="region of interest" description="Disordered" evidence="2">
    <location>
        <begin position="156"/>
        <end position="179"/>
    </location>
</feature>
<protein>
    <recommendedName>
        <fullName evidence="1">Replication restart protein DnaT</fullName>
    </recommendedName>
</protein>
<organism>
    <name type="scientific">Shigella dysenteriae serotype 1 (strain Sd197)</name>
    <dbReference type="NCBI Taxonomy" id="300267"/>
    <lineage>
        <taxon>Bacteria</taxon>
        <taxon>Pseudomonadati</taxon>
        <taxon>Pseudomonadota</taxon>
        <taxon>Gammaproteobacteria</taxon>
        <taxon>Enterobacterales</taxon>
        <taxon>Enterobacteriaceae</taxon>
        <taxon>Shigella</taxon>
    </lineage>
</organism>
<keyword id="KW-0235">DNA replication</keyword>
<keyword id="KW-0238">DNA-binding</keyword>
<keyword id="KW-0639">Primosome</keyword>
<keyword id="KW-1185">Reference proteome</keyword>
<dbReference type="EMBL" id="CP000034">
    <property type="protein sequence ID" value="ABB64471.1"/>
    <property type="molecule type" value="Genomic_DNA"/>
</dbReference>
<dbReference type="RefSeq" id="WP_011378979.1">
    <property type="nucleotide sequence ID" value="NC_007606.1"/>
</dbReference>
<dbReference type="RefSeq" id="YP_405962.1">
    <property type="nucleotide sequence ID" value="NC_007606.1"/>
</dbReference>
<dbReference type="SMR" id="Q327N4"/>
<dbReference type="STRING" id="300267.SDY_4616"/>
<dbReference type="EnsemblBacteria" id="ABB64471">
    <property type="protein sequence ID" value="ABB64471"/>
    <property type="gene ID" value="SDY_4616"/>
</dbReference>
<dbReference type="KEGG" id="sdy:SDY_4616"/>
<dbReference type="PATRIC" id="fig|300267.13.peg.5471"/>
<dbReference type="HOGENOM" id="CLU_1501592_0_0_6"/>
<dbReference type="Proteomes" id="UP000002716">
    <property type="component" value="Chromosome"/>
</dbReference>
<dbReference type="GO" id="GO:1990077">
    <property type="term" value="C:primosome complex"/>
    <property type="evidence" value="ECO:0007669"/>
    <property type="project" value="UniProtKB-KW"/>
</dbReference>
<dbReference type="GO" id="GO:0006269">
    <property type="term" value="P:DNA replication, synthesis of primer"/>
    <property type="evidence" value="ECO:0007669"/>
    <property type="project" value="UniProtKB-UniRule"/>
</dbReference>
<dbReference type="FunFam" id="1.10.8.1180:FF:000001">
    <property type="entry name" value="Primosomal protein 1"/>
    <property type="match status" value="1"/>
</dbReference>
<dbReference type="Gene3D" id="1.10.8.1180">
    <property type="match status" value="1"/>
</dbReference>
<dbReference type="HAMAP" id="MF_01061">
    <property type="entry name" value="DnaT"/>
    <property type="match status" value="1"/>
</dbReference>
<dbReference type="InterPro" id="IPR020917">
    <property type="entry name" value="DnaT"/>
</dbReference>
<dbReference type="InterPro" id="IPR040480">
    <property type="entry name" value="DnaT_DNA_bind"/>
</dbReference>
<dbReference type="NCBIfam" id="NF002770">
    <property type="entry name" value="PRK02854.1"/>
    <property type="match status" value="1"/>
</dbReference>
<dbReference type="Pfam" id="PF17948">
    <property type="entry name" value="DnaT"/>
    <property type="match status" value="1"/>
</dbReference>
<reference key="1">
    <citation type="journal article" date="2005" name="Nucleic Acids Res.">
        <title>Genome dynamics and diversity of Shigella species, the etiologic agents of bacillary dysentery.</title>
        <authorList>
            <person name="Yang F."/>
            <person name="Yang J."/>
            <person name="Zhang X."/>
            <person name="Chen L."/>
            <person name="Jiang Y."/>
            <person name="Yan Y."/>
            <person name="Tang X."/>
            <person name="Wang J."/>
            <person name="Xiong Z."/>
            <person name="Dong J."/>
            <person name="Xue Y."/>
            <person name="Zhu Y."/>
            <person name="Xu X."/>
            <person name="Sun L."/>
            <person name="Chen S."/>
            <person name="Nie H."/>
            <person name="Peng J."/>
            <person name="Xu J."/>
            <person name="Wang Y."/>
            <person name="Yuan Z."/>
            <person name="Wen Y."/>
            <person name="Yao Z."/>
            <person name="Shen Y."/>
            <person name="Qiang B."/>
            <person name="Hou Y."/>
            <person name="Yu J."/>
            <person name="Jin Q."/>
        </authorList>
    </citation>
    <scope>NUCLEOTIDE SEQUENCE [LARGE SCALE GENOMIC DNA]</scope>
    <source>
        <strain>Sd197</strain>
    </source>
</reference>
<gene>
    <name evidence="1" type="primary">dnaT</name>
    <name type="ordered locus">SDY_4616</name>
</gene>
<accession>Q327N4</accession>
<sequence>MSSRVLTPDVVGIDALVHDHQTVLAKAEGGVVAVFANNAPAFYAVTPARLAELLALEEKLARPGSDVALDEQLYQEPQAAPVAVPMGKFAMYPDWQPDADFIRLAALWGVALREPVTTEELASFIAYWQAEGKVFHHVQWQQKLARSLQIGRASNGGLPKRDVNTVSEPDSQIPPGFRG</sequence>
<evidence type="ECO:0000255" key="1">
    <source>
        <dbReference type="HAMAP-Rule" id="MF_01061"/>
    </source>
</evidence>
<evidence type="ECO:0000256" key="2">
    <source>
        <dbReference type="SAM" id="MobiDB-lite"/>
    </source>
</evidence>
<comment type="function">
    <text evidence="1">Involved in the restart of stalled replication forks, which reloads the replicative helicase on sites other than the origin of replication. Can function in multiple replication restart pathways. Displaces ssDNA from a PriB-ssDNA complex. Probably forms a spiral filament on ssDNA.</text>
</comment>
<comment type="subunit">
    <text evidence="1">Homooligomerizes. Interacts with PriB. Component of the replication restart primosome. Primosome assembly occurs via a 'hand-off' mechanism. PriA binds to replication forks, subsequently PriB then DnaT bind; DnaT then displaces ssDNA to generate the helicase loading substrate.</text>
</comment>
<comment type="similarity">
    <text evidence="1">Belongs to the DnaT family.</text>
</comment>